<dbReference type="EC" id="2.1.1.-"/>
<dbReference type="EMBL" id="U66108">
    <property type="protein sequence ID" value="AAC44618.1"/>
    <property type="molecule type" value="Genomic_DNA"/>
</dbReference>
<dbReference type="EMBL" id="CP000611">
    <property type="protein sequence ID" value="ABQ72378.1"/>
    <property type="molecule type" value="Genomic_DNA"/>
</dbReference>
<dbReference type="RefSeq" id="WP_003403302.1">
    <property type="nucleotide sequence ID" value="NZ_CP016972.1"/>
</dbReference>
<dbReference type="SMR" id="A5U028"/>
<dbReference type="GeneID" id="45424603"/>
<dbReference type="KEGG" id="mra:MRA_0654"/>
<dbReference type="eggNOG" id="COG2230">
    <property type="taxonomic scope" value="Bacteria"/>
</dbReference>
<dbReference type="HOGENOM" id="CLU_026434_3_0_11"/>
<dbReference type="UniPathway" id="UPA00915"/>
<dbReference type="Proteomes" id="UP000001988">
    <property type="component" value="Chromosome"/>
</dbReference>
<dbReference type="GO" id="GO:0008171">
    <property type="term" value="F:O-methyltransferase activity"/>
    <property type="evidence" value="ECO:0000315"/>
    <property type="project" value="UniProtKB"/>
</dbReference>
<dbReference type="GO" id="GO:0008610">
    <property type="term" value="P:lipid biosynthetic process"/>
    <property type="evidence" value="ECO:0000315"/>
    <property type="project" value="UniProtKB"/>
</dbReference>
<dbReference type="GO" id="GO:0032259">
    <property type="term" value="P:methylation"/>
    <property type="evidence" value="ECO:0007669"/>
    <property type="project" value="UniProtKB-KW"/>
</dbReference>
<dbReference type="CDD" id="cd02440">
    <property type="entry name" value="AdoMet_MTases"/>
    <property type="match status" value="1"/>
</dbReference>
<dbReference type="FunFam" id="3.40.50.150:FF:000115">
    <property type="entry name" value="Cyclopropane mycolic acid synthase 1"/>
    <property type="match status" value="1"/>
</dbReference>
<dbReference type="Gene3D" id="3.40.50.150">
    <property type="entry name" value="Vaccinia Virus protein VP39"/>
    <property type="match status" value="1"/>
</dbReference>
<dbReference type="InterPro" id="IPR050723">
    <property type="entry name" value="CFA/CMAS"/>
</dbReference>
<dbReference type="InterPro" id="IPR003333">
    <property type="entry name" value="CMAS"/>
</dbReference>
<dbReference type="InterPro" id="IPR047672">
    <property type="entry name" value="CMAS_actinobact"/>
</dbReference>
<dbReference type="InterPro" id="IPR029063">
    <property type="entry name" value="SAM-dependent_MTases_sf"/>
</dbReference>
<dbReference type="NCBIfam" id="NF040660">
    <property type="entry name" value="mycolic_MTase"/>
    <property type="match status" value="1"/>
</dbReference>
<dbReference type="PANTHER" id="PTHR43667">
    <property type="entry name" value="CYCLOPROPANE-FATTY-ACYL-PHOSPHOLIPID SYNTHASE"/>
    <property type="match status" value="1"/>
</dbReference>
<dbReference type="PANTHER" id="PTHR43667:SF1">
    <property type="entry name" value="CYCLOPROPANE-FATTY-ACYL-PHOSPHOLIPID SYNTHASE"/>
    <property type="match status" value="1"/>
</dbReference>
<dbReference type="Pfam" id="PF02353">
    <property type="entry name" value="CMAS"/>
    <property type="match status" value="1"/>
</dbReference>
<dbReference type="PIRSF" id="PIRSF003085">
    <property type="entry name" value="CMAS"/>
    <property type="match status" value="1"/>
</dbReference>
<dbReference type="SUPFAM" id="SSF53335">
    <property type="entry name" value="S-adenosyl-L-methionine-dependent methyltransferases"/>
    <property type="match status" value="1"/>
</dbReference>
<evidence type="ECO:0000250" key="1"/>
<evidence type="ECO:0000269" key="2">
    <source>
    </source>
</evidence>
<evidence type="ECO:0000305" key="3"/>
<name>MMAA3_MYCTA</name>
<reference key="1">
    <citation type="journal article" date="1996" name="Proc. Natl. Acad. Sci. U.S.A.">
        <title>A common mechanism for the biosynthesis of methoxy and cyclopropyl mycolic acids in Mycobacterium tuberculosis.</title>
        <authorList>
            <person name="Yuan Y."/>
            <person name="Barry C.E. III"/>
        </authorList>
    </citation>
    <scope>NUCLEOTIDE SEQUENCE [GENOMIC DNA]</scope>
    <scope>FUNCTION IN OXYGEN-CONTAINING MYCOLATES BIOSYNTHESIS</scope>
</reference>
<reference key="2">
    <citation type="journal article" date="2008" name="PLoS ONE">
        <title>Genetic basis of virulence attenuation revealed by comparative genomic analysis of Mycobacterium tuberculosis strain H37Ra versus H37Rv.</title>
        <authorList>
            <person name="Zheng H."/>
            <person name="Lu L."/>
            <person name="Wang B."/>
            <person name="Pu S."/>
            <person name="Zhang X."/>
            <person name="Zhu G."/>
            <person name="Shi W."/>
            <person name="Zhang L."/>
            <person name="Wang H."/>
            <person name="Wang S."/>
            <person name="Zhao G."/>
            <person name="Zhang Y."/>
        </authorList>
    </citation>
    <scope>NUCLEOTIDE SEQUENCE [LARGE SCALE GENOMIC DNA]</scope>
    <source>
        <strain>ATCC 25177 / H37Ra</strain>
    </source>
</reference>
<protein>
    <recommendedName>
        <fullName>Methoxy mycolic acid synthase MmaA3</fullName>
        <ecNumber>2.1.1.-</ecNumber>
    </recommendedName>
    <alternativeName>
        <fullName>Mycolic acid methyltransferase</fullName>
        <shortName>MA-MT</shortName>
    </alternativeName>
    <alternativeName>
        <fullName>S-adenosylmethionine-dependent methyltransferase</fullName>
        <shortName>AdoMet-MT</shortName>
        <shortName>SAM-MT</shortName>
    </alternativeName>
</protein>
<comment type="function">
    <text evidence="2">Involved in the biosynthesis of methoxymycolic acid. It catalyzes the O-methylation of the hydroxy group of the hydroxymycolate to form a methyl ether.</text>
</comment>
<comment type="pathway">
    <text>Lipid metabolism; mycolic acid biosynthesis.</text>
</comment>
<comment type="similarity">
    <text evidence="3">Belongs to the CFA/CMAS family.</text>
</comment>
<organism>
    <name type="scientific">Mycobacterium tuberculosis (strain ATCC 25177 / H37Ra)</name>
    <dbReference type="NCBI Taxonomy" id="419947"/>
    <lineage>
        <taxon>Bacteria</taxon>
        <taxon>Bacillati</taxon>
        <taxon>Actinomycetota</taxon>
        <taxon>Actinomycetes</taxon>
        <taxon>Mycobacteriales</taxon>
        <taxon>Mycobacteriaceae</taxon>
        <taxon>Mycobacterium</taxon>
        <taxon>Mycobacterium tuberculosis complex</taxon>
    </lineage>
</organism>
<gene>
    <name type="primary">mmaA3</name>
    <name type="synonym">mma2</name>
    <name type="ordered locus">MRA_0654</name>
</gene>
<accession>A5U028</accession>
<accession>O08053</accession>
<accession>P72027</accession>
<accession>Q79FX7</accession>
<sequence length="293" mass="33263">MSDNSTGTTKSRSNVDDVQAHYDLSDAFFALFQDPTRTYSCAYFERDDMTLHEAQVAKLDLTLGKLGLEPGMTLLDVGCGWGSVMKRAVERYDVNVVGLTLSKNQHAYCQQVLDKVDTNRSHRVLLSDWANFSEPVDRIVTIEAIEHFGFERYDDFFKFAYNAMPADGVMLLHSITGLHVKQVIERGIPLTMEMAKFIRFIVTDIFPGGRLPTIETIEEHVTKAGFTITDIQSLQPHFARTLDLWAEALQAHKDEAIEIQSAEVYERYMKYLTGCAKAFRMGYIDCNQFTLAK</sequence>
<keyword id="KW-0444">Lipid biosynthesis</keyword>
<keyword id="KW-0443">Lipid metabolism</keyword>
<keyword id="KW-0489">Methyltransferase</keyword>
<keyword id="KW-1185">Reference proteome</keyword>
<keyword id="KW-0949">S-adenosyl-L-methionine</keyword>
<keyword id="KW-0808">Transferase</keyword>
<feature type="chain" id="PRO_0000398364" description="Methoxy mycolic acid synthase MmaA3">
    <location>
        <begin position="1"/>
        <end position="293"/>
    </location>
</feature>
<feature type="active site" evidence="1">
    <location>
        <position position="275"/>
    </location>
</feature>
<feature type="binding site" evidence="1">
    <location>
        <begin position="39"/>
        <end position="40"/>
    </location>
    <ligand>
        <name>S-adenosyl-L-methionine</name>
        <dbReference type="ChEBI" id="CHEBI:59789"/>
    </ligand>
</feature>
<feature type="binding site" evidence="1">
    <location>
        <begin position="78"/>
        <end position="80"/>
    </location>
    <ligand>
        <name>S-adenosyl-L-methionine</name>
        <dbReference type="ChEBI" id="CHEBI:59789"/>
    </ligand>
</feature>
<feature type="binding site" evidence="1">
    <location>
        <begin position="100"/>
        <end position="105"/>
    </location>
    <ligand>
        <name>S-adenosyl-L-methionine</name>
        <dbReference type="ChEBI" id="CHEBI:59789"/>
    </ligand>
</feature>
<feature type="binding site" evidence="1">
    <location>
        <begin position="129"/>
        <end position="130"/>
    </location>
    <ligand>
        <name>S-adenosyl-L-methionine</name>
        <dbReference type="ChEBI" id="CHEBI:59789"/>
    </ligand>
</feature>
<feature type="binding site" evidence="1">
    <location>
        <position position="142"/>
    </location>
    <ligand>
        <name>S-adenosyl-L-methionine</name>
        <dbReference type="ChEBI" id="CHEBI:59789"/>
    </ligand>
</feature>
<proteinExistence type="evidence at protein level"/>